<organism>
    <name type="scientific">Escherichia coli (strain 55989 / EAEC)</name>
    <dbReference type="NCBI Taxonomy" id="585055"/>
    <lineage>
        <taxon>Bacteria</taxon>
        <taxon>Pseudomonadati</taxon>
        <taxon>Pseudomonadota</taxon>
        <taxon>Gammaproteobacteria</taxon>
        <taxon>Enterobacterales</taxon>
        <taxon>Enterobacteriaceae</taxon>
        <taxon>Escherichia</taxon>
    </lineage>
</organism>
<gene>
    <name evidence="1" type="primary">yfbV</name>
    <name type="ordered locus">EC55989_2539</name>
</gene>
<accession>B7LBE9</accession>
<comment type="subcellular location">
    <subcellularLocation>
        <location evidence="1">Cell inner membrane</location>
        <topology evidence="1">Multi-pass membrane protein</topology>
    </subcellularLocation>
</comment>
<comment type="similarity">
    <text evidence="1">Belongs to the UPF0208 family.</text>
</comment>
<protein>
    <recommendedName>
        <fullName evidence="1">UPF0208 membrane protein YfbV</fullName>
    </recommendedName>
</protein>
<proteinExistence type="inferred from homology"/>
<evidence type="ECO:0000255" key="1">
    <source>
        <dbReference type="HAMAP-Rule" id="MF_01101"/>
    </source>
</evidence>
<keyword id="KW-0997">Cell inner membrane</keyword>
<keyword id="KW-1003">Cell membrane</keyword>
<keyword id="KW-0472">Membrane</keyword>
<keyword id="KW-1185">Reference proteome</keyword>
<keyword id="KW-0812">Transmembrane</keyword>
<keyword id="KW-1133">Transmembrane helix</keyword>
<reference key="1">
    <citation type="journal article" date="2009" name="PLoS Genet.">
        <title>Organised genome dynamics in the Escherichia coli species results in highly diverse adaptive paths.</title>
        <authorList>
            <person name="Touchon M."/>
            <person name="Hoede C."/>
            <person name="Tenaillon O."/>
            <person name="Barbe V."/>
            <person name="Baeriswyl S."/>
            <person name="Bidet P."/>
            <person name="Bingen E."/>
            <person name="Bonacorsi S."/>
            <person name="Bouchier C."/>
            <person name="Bouvet O."/>
            <person name="Calteau A."/>
            <person name="Chiapello H."/>
            <person name="Clermont O."/>
            <person name="Cruveiller S."/>
            <person name="Danchin A."/>
            <person name="Diard M."/>
            <person name="Dossat C."/>
            <person name="Karoui M.E."/>
            <person name="Frapy E."/>
            <person name="Garry L."/>
            <person name="Ghigo J.M."/>
            <person name="Gilles A.M."/>
            <person name="Johnson J."/>
            <person name="Le Bouguenec C."/>
            <person name="Lescat M."/>
            <person name="Mangenot S."/>
            <person name="Martinez-Jehanne V."/>
            <person name="Matic I."/>
            <person name="Nassif X."/>
            <person name="Oztas S."/>
            <person name="Petit M.A."/>
            <person name="Pichon C."/>
            <person name="Rouy Z."/>
            <person name="Ruf C.S."/>
            <person name="Schneider D."/>
            <person name="Tourret J."/>
            <person name="Vacherie B."/>
            <person name="Vallenet D."/>
            <person name="Medigue C."/>
            <person name="Rocha E.P.C."/>
            <person name="Denamur E."/>
        </authorList>
    </citation>
    <scope>NUCLEOTIDE SEQUENCE [LARGE SCALE GENOMIC DNA]</scope>
    <source>
        <strain>55989 / EAEC</strain>
    </source>
</reference>
<dbReference type="EMBL" id="CU928145">
    <property type="protein sequence ID" value="CAU98407.1"/>
    <property type="molecule type" value="Genomic_DNA"/>
</dbReference>
<dbReference type="RefSeq" id="WP_000106627.1">
    <property type="nucleotide sequence ID" value="NZ_CP028304.1"/>
</dbReference>
<dbReference type="GeneID" id="93774879"/>
<dbReference type="KEGG" id="eck:EC55989_2539"/>
<dbReference type="HOGENOM" id="CLU_128746_0_0_6"/>
<dbReference type="Proteomes" id="UP000000746">
    <property type="component" value="Chromosome"/>
</dbReference>
<dbReference type="GO" id="GO:0005886">
    <property type="term" value="C:plasma membrane"/>
    <property type="evidence" value="ECO:0007669"/>
    <property type="project" value="UniProtKB-SubCell"/>
</dbReference>
<dbReference type="HAMAP" id="MF_01101">
    <property type="entry name" value="UPF0208"/>
    <property type="match status" value="1"/>
</dbReference>
<dbReference type="InterPro" id="IPR007334">
    <property type="entry name" value="UPF0208"/>
</dbReference>
<dbReference type="NCBIfam" id="NF002493">
    <property type="entry name" value="PRK01816.1"/>
    <property type="match status" value="1"/>
</dbReference>
<dbReference type="Pfam" id="PF04217">
    <property type="entry name" value="DUF412"/>
    <property type="match status" value="1"/>
</dbReference>
<sequence>MSTPDNRSVNFFSLFRRGQHYSKTWPLEKRLAPVFVENRVIKMTRYAIRFMPPIAVFTLCWQIALGGQLGPAVATALFALSLPMQGLWWLGKRSVTPLPPAILNWFYEVRGKLQESGQVLAPVEGKPDYQALADTLKRAFKQLDKTFLDDL</sequence>
<feature type="chain" id="PRO_1000149900" description="UPF0208 membrane protein YfbV">
    <location>
        <begin position="1"/>
        <end position="151"/>
    </location>
</feature>
<feature type="transmembrane region" description="Helical" evidence="1">
    <location>
        <begin position="46"/>
        <end position="65"/>
    </location>
</feature>
<feature type="transmembrane region" description="Helical" evidence="1">
    <location>
        <begin position="69"/>
        <end position="91"/>
    </location>
</feature>
<name>YFBV_ECO55</name>